<reference key="1">
    <citation type="journal article" date="1991" name="Plant Mol. Biol.">
        <title>Structure, expression, chromosomal location and product of the gene encoding ADH1 in Petunia.</title>
        <authorList>
            <person name="Gregerson R."/>
            <person name="McLean M."/>
            <person name="Beld M."/>
            <person name="Gerats A.G.M."/>
            <person name="Strommer J."/>
        </authorList>
    </citation>
    <scope>NUCLEOTIDE SEQUENCE [GENOMIC DNA]</scope>
    <scope>FUNCTION</scope>
    <scope>CATALYTIC ACTIVITY</scope>
    <scope>HOMODIMER</scope>
    <source>
        <strain>cv. Violet 30</strain>
    </source>
</reference>
<organism>
    <name type="scientific">Petunia hybrida</name>
    <name type="common">Petunia</name>
    <dbReference type="NCBI Taxonomy" id="4102"/>
    <lineage>
        <taxon>Eukaryota</taxon>
        <taxon>Viridiplantae</taxon>
        <taxon>Streptophyta</taxon>
        <taxon>Embryophyta</taxon>
        <taxon>Tracheophyta</taxon>
        <taxon>Spermatophyta</taxon>
        <taxon>Magnoliopsida</taxon>
        <taxon>eudicotyledons</taxon>
        <taxon>Gunneridae</taxon>
        <taxon>Pentapetalae</taxon>
        <taxon>asterids</taxon>
        <taxon>lamiids</taxon>
        <taxon>Solanales</taxon>
        <taxon>Solanaceae</taxon>
        <taxon>Petunioideae</taxon>
        <taxon>Petunia</taxon>
    </lineage>
</organism>
<dbReference type="EC" id="1.1.1.1" evidence="3"/>
<dbReference type="EMBL" id="X54106">
    <property type="protein sequence ID" value="CAA38039.1"/>
    <property type="molecule type" value="Genomic_DNA"/>
</dbReference>
<dbReference type="PIR" id="S16596">
    <property type="entry name" value="DEPJA1"/>
</dbReference>
<dbReference type="SMR" id="P25141"/>
<dbReference type="GO" id="GO:0005829">
    <property type="term" value="C:cytosol"/>
    <property type="evidence" value="ECO:0007669"/>
    <property type="project" value="TreeGrafter"/>
</dbReference>
<dbReference type="GO" id="GO:0004022">
    <property type="term" value="F:alcohol dehydrogenase (NAD+) activity"/>
    <property type="evidence" value="ECO:0007669"/>
    <property type="project" value="UniProtKB-EC"/>
</dbReference>
<dbReference type="GO" id="GO:0051903">
    <property type="term" value="F:S-(hydroxymethyl)glutathione dehydrogenase [NAD(P)+] activity"/>
    <property type="evidence" value="ECO:0007669"/>
    <property type="project" value="TreeGrafter"/>
</dbReference>
<dbReference type="GO" id="GO:0008270">
    <property type="term" value="F:zinc ion binding"/>
    <property type="evidence" value="ECO:0007669"/>
    <property type="project" value="InterPro"/>
</dbReference>
<dbReference type="GO" id="GO:0009820">
    <property type="term" value="P:alkaloid metabolic process"/>
    <property type="evidence" value="ECO:0007669"/>
    <property type="project" value="UniProtKB-ARBA"/>
</dbReference>
<dbReference type="GO" id="GO:0046294">
    <property type="term" value="P:formaldehyde catabolic process"/>
    <property type="evidence" value="ECO:0007669"/>
    <property type="project" value="TreeGrafter"/>
</dbReference>
<dbReference type="CDD" id="cd08301">
    <property type="entry name" value="alcohol_DH_plants"/>
    <property type="match status" value="1"/>
</dbReference>
<dbReference type="FunFam" id="3.90.180.10:FF:000067">
    <property type="entry name" value="alcohol dehydrogenase 1-like isoform X1"/>
    <property type="match status" value="1"/>
</dbReference>
<dbReference type="FunFam" id="3.40.50.720:FF:001292">
    <property type="entry name" value="Alcohol dehydrogenase class-P"/>
    <property type="match status" value="1"/>
</dbReference>
<dbReference type="Gene3D" id="3.90.180.10">
    <property type="entry name" value="Medium-chain alcohol dehydrogenases, catalytic domain"/>
    <property type="match status" value="1"/>
</dbReference>
<dbReference type="Gene3D" id="3.40.50.720">
    <property type="entry name" value="NAD(P)-binding Rossmann-like Domain"/>
    <property type="match status" value="1"/>
</dbReference>
<dbReference type="InterPro" id="IPR013149">
    <property type="entry name" value="ADH-like_C"/>
</dbReference>
<dbReference type="InterPro" id="IPR013154">
    <property type="entry name" value="ADH-like_N"/>
</dbReference>
<dbReference type="InterPro" id="IPR002328">
    <property type="entry name" value="ADH_Zn_CS"/>
</dbReference>
<dbReference type="InterPro" id="IPR011032">
    <property type="entry name" value="GroES-like_sf"/>
</dbReference>
<dbReference type="InterPro" id="IPR036291">
    <property type="entry name" value="NAD(P)-bd_dom_sf"/>
</dbReference>
<dbReference type="PANTHER" id="PTHR43880">
    <property type="entry name" value="ALCOHOL DEHYDROGENASE"/>
    <property type="match status" value="1"/>
</dbReference>
<dbReference type="PANTHER" id="PTHR43880:SF9">
    <property type="entry name" value="ALCOHOL DEHYDROGENASE 1"/>
    <property type="match status" value="1"/>
</dbReference>
<dbReference type="Pfam" id="PF08240">
    <property type="entry name" value="ADH_N"/>
    <property type="match status" value="1"/>
</dbReference>
<dbReference type="Pfam" id="PF00107">
    <property type="entry name" value="ADH_zinc_N"/>
    <property type="match status" value="1"/>
</dbReference>
<dbReference type="SUPFAM" id="SSF50129">
    <property type="entry name" value="GroES-like"/>
    <property type="match status" value="2"/>
</dbReference>
<dbReference type="SUPFAM" id="SSF51735">
    <property type="entry name" value="NAD(P)-binding Rossmann-fold domains"/>
    <property type="match status" value="1"/>
</dbReference>
<dbReference type="PROSITE" id="PS00059">
    <property type="entry name" value="ADH_ZINC"/>
    <property type="match status" value="1"/>
</dbReference>
<name>ADH1_PETHY</name>
<gene>
    <name type="primary">ADH1</name>
</gene>
<sequence>MSSNTAGQVIRCKAAVAWEAGKPLVIEEVEVAPPQKMEVRLKILFTSLCHTDVYFWEAKGQTPLFPRIFGHEAGGIVESVGEGVTDLKPGDHVLPVFTGECQQCRHCKSEESNMCDLLRINTDRGVMIHDGQTRFSKDGKPIYHFVGTSTFSEYTVCHSGCVTKIDPQAPLDKVCVLSCGISTGLGATLNVAKPTKGSTVAIFGLGAVGLAAAEGARIAGASRIIGVDLNPSRFNDAKKFGVTEFVNPKDHGDKPVQQVIAEMTDGGVDRSVECTGNVNAMISAFECVHDGWGVAVLVGVPNKDDAFKTHPMNLLNERTLKGTFFGNYKPKSDIPSVVDKYMKKELELEKFITHQVPFSEINKAFDYMLKGESIRCMITMEH</sequence>
<proteinExistence type="evidence at protein level"/>
<comment type="function">
    <text evidence="3">This protein is responsible for the conversion of alcohols to aldehydes in plants and is important for NAD metabolism during anaerobic respiration.</text>
</comment>
<comment type="catalytic activity">
    <reaction evidence="3">
        <text>a primary alcohol + NAD(+) = an aldehyde + NADH + H(+)</text>
        <dbReference type="Rhea" id="RHEA:10736"/>
        <dbReference type="ChEBI" id="CHEBI:15378"/>
        <dbReference type="ChEBI" id="CHEBI:15734"/>
        <dbReference type="ChEBI" id="CHEBI:17478"/>
        <dbReference type="ChEBI" id="CHEBI:57540"/>
        <dbReference type="ChEBI" id="CHEBI:57945"/>
        <dbReference type="EC" id="1.1.1.1"/>
    </reaction>
</comment>
<comment type="catalytic activity">
    <reaction evidence="3">
        <text>a secondary alcohol + NAD(+) = a ketone + NADH + H(+)</text>
        <dbReference type="Rhea" id="RHEA:10740"/>
        <dbReference type="ChEBI" id="CHEBI:15378"/>
        <dbReference type="ChEBI" id="CHEBI:17087"/>
        <dbReference type="ChEBI" id="CHEBI:35681"/>
        <dbReference type="ChEBI" id="CHEBI:57540"/>
        <dbReference type="ChEBI" id="CHEBI:57945"/>
        <dbReference type="EC" id="1.1.1.1"/>
    </reaction>
</comment>
<comment type="cofactor">
    <cofactor evidence="2">
        <name>Zn(2+)</name>
        <dbReference type="ChEBI" id="CHEBI:29105"/>
    </cofactor>
    <text evidence="2">Binds 2 Zn(2+) ions per subunit.</text>
</comment>
<comment type="subunit">
    <text evidence="3">Homodimer.</text>
</comment>
<comment type="subcellular location">
    <subcellularLocation>
        <location evidence="2">Cytoplasm</location>
    </subcellularLocation>
</comment>
<comment type="similarity">
    <text evidence="5">Belongs to the zinc-containing alcohol dehydrogenase family.</text>
</comment>
<protein>
    <recommendedName>
        <fullName evidence="4">Alcohol dehydrogenase 1</fullName>
        <ecNumber evidence="3">1.1.1.1</ecNumber>
    </recommendedName>
</protein>
<keyword id="KW-0963">Cytoplasm</keyword>
<keyword id="KW-0479">Metal-binding</keyword>
<keyword id="KW-0520">NAD</keyword>
<keyword id="KW-0560">Oxidoreductase</keyword>
<keyword id="KW-0862">Zinc</keyword>
<feature type="chain" id="PRO_0000160711" description="Alcohol dehydrogenase 1">
    <location>
        <begin position="1"/>
        <end position="382"/>
    </location>
</feature>
<feature type="binding site" evidence="2">
    <location>
        <position position="49"/>
    </location>
    <ligand>
        <name>Zn(2+)</name>
        <dbReference type="ChEBI" id="CHEBI:29105"/>
        <label>1</label>
        <note>catalytic</note>
    </ligand>
</feature>
<feature type="binding site" evidence="2">
    <location>
        <position position="51"/>
    </location>
    <ligand>
        <name>an alcohol</name>
        <dbReference type="ChEBI" id="CHEBI:30879"/>
    </ligand>
</feature>
<feature type="binding site" evidence="2">
    <location>
        <position position="51"/>
    </location>
    <ligand>
        <name>NAD(+)</name>
        <dbReference type="ChEBI" id="CHEBI:57540"/>
    </ligand>
</feature>
<feature type="binding site" evidence="2">
    <location>
        <position position="51"/>
    </location>
    <ligand>
        <name>Zn(2+)</name>
        <dbReference type="ChEBI" id="CHEBI:29105"/>
        <label>1</label>
        <note>catalytic</note>
    </ligand>
</feature>
<feature type="binding site" evidence="1">
    <location>
        <position position="71"/>
    </location>
    <ligand>
        <name>an alcohol</name>
        <dbReference type="ChEBI" id="CHEBI:30879"/>
    </ligand>
</feature>
<feature type="binding site" evidence="2">
    <location>
        <position position="71"/>
    </location>
    <ligand>
        <name>Zn(2+)</name>
        <dbReference type="ChEBI" id="CHEBI:29105"/>
        <label>1</label>
        <note>catalytic</note>
    </ligand>
</feature>
<feature type="binding site" evidence="2">
    <location>
        <position position="101"/>
    </location>
    <ligand>
        <name>Zn(2+)</name>
        <dbReference type="ChEBI" id="CHEBI:29105"/>
        <label>2</label>
    </ligand>
</feature>
<feature type="binding site" evidence="2">
    <location>
        <position position="104"/>
    </location>
    <ligand>
        <name>Zn(2+)</name>
        <dbReference type="ChEBI" id="CHEBI:29105"/>
        <label>2</label>
    </ligand>
</feature>
<feature type="binding site" evidence="2">
    <location>
        <position position="107"/>
    </location>
    <ligand>
        <name>Zn(2+)</name>
        <dbReference type="ChEBI" id="CHEBI:29105"/>
        <label>2</label>
    </ligand>
</feature>
<feature type="binding site" evidence="2">
    <location>
        <position position="115"/>
    </location>
    <ligand>
        <name>Zn(2+)</name>
        <dbReference type="ChEBI" id="CHEBI:29105"/>
        <label>2</label>
    </ligand>
</feature>
<feature type="binding site" evidence="2">
    <location>
        <position position="179"/>
    </location>
    <ligand>
        <name>Zn(2+)</name>
        <dbReference type="ChEBI" id="CHEBI:29105"/>
        <label>1</label>
        <note>catalytic</note>
    </ligand>
</feature>
<feature type="binding site" evidence="2">
    <location>
        <begin position="204"/>
        <end position="209"/>
    </location>
    <ligand>
        <name>NAD(+)</name>
        <dbReference type="ChEBI" id="CHEBI:57540"/>
    </ligand>
</feature>
<feature type="binding site" evidence="2">
    <location>
        <position position="228"/>
    </location>
    <ligand>
        <name>NAD(+)</name>
        <dbReference type="ChEBI" id="CHEBI:57540"/>
    </ligand>
</feature>
<feature type="binding site" evidence="2">
    <location>
        <position position="233"/>
    </location>
    <ligand>
        <name>NAD(+)</name>
        <dbReference type="ChEBI" id="CHEBI:57540"/>
    </ligand>
</feature>
<feature type="binding site" evidence="2">
    <location>
        <position position="275"/>
    </location>
    <ligand>
        <name>NAD(+)</name>
        <dbReference type="ChEBI" id="CHEBI:57540"/>
    </ligand>
</feature>
<feature type="binding site" evidence="1">
    <location>
        <begin position="298"/>
        <end position="300"/>
    </location>
    <ligand>
        <name>NAD(+)</name>
        <dbReference type="ChEBI" id="CHEBI:57540"/>
    </ligand>
</feature>
<feature type="binding site" evidence="2">
    <location>
        <position position="298"/>
    </location>
    <ligand>
        <name>NAD(+)</name>
        <dbReference type="ChEBI" id="CHEBI:57540"/>
    </ligand>
</feature>
<feature type="binding site" evidence="2">
    <location>
        <position position="325"/>
    </location>
    <ligand>
        <name>NAD(+)</name>
        <dbReference type="ChEBI" id="CHEBI:57540"/>
    </ligand>
</feature>
<feature type="binding site" evidence="2">
    <location>
        <position position="375"/>
    </location>
    <ligand>
        <name>NAD(+)</name>
        <dbReference type="ChEBI" id="CHEBI:57540"/>
    </ligand>
</feature>
<evidence type="ECO:0000250" key="1">
    <source>
        <dbReference type="UniProtKB" id="P00327"/>
    </source>
</evidence>
<evidence type="ECO:0000250" key="2">
    <source>
        <dbReference type="UniProtKB" id="P06525"/>
    </source>
</evidence>
<evidence type="ECO:0000269" key="3">
    <source>
    </source>
</evidence>
<evidence type="ECO:0000303" key="4">
    <source>
    </source>
</evidence>
<evidence type="ECO:0000305" key="5"/>
<accession>P25141</accession>